<organism>
    <name type="scientific">Brucella melitensis biotype 1 (strain ATCC 23456 / CCUG 17765 / NCTC 10094 / 16M)</name>
    <dbReference type="NCBI Taxonomy" id="224914"/>
    <lineage>
        <taxon>Bacteria</taxon>
        <taxon>Pseudomonadati</taxon>
        <taxon>Pseudomonadota</taxon>
        <taxon>Alphaproteobacteria</taxon>
        <taxon>Hyphomicrobiales</taxon>
        <taxon>Brucellaceae</taxon>
        <taxon>Brucella/Ochrobactrum group</taxon>
        <taxon>Brucella</taxon>
    </lineage>
</organism>
<sequence length="874" mass="96908">MNIEKYTERVRGFIQSAQTFALSSGNQQFTPEHILKVLIDDDEGLAASLVERAGGRVGDVRMGLQSALEKLPKVSGGNDQLYLSQPLAKVFSLAEELASKAGDSFVTVERLLTALAMEKSAKTSEILSAAGVTPTALNRVINDMRKGRTADSASAESNYDALKKYARDLTEDARAGKLDPVIGRDEEIRRTIQVLSRRTKNNPVLIGEPGVGKTAIAEGLALRIVNGDVPESLKDKQLMALDMGALIAGAKYRGEFEERLKAVLSEVQTAAGQIILFIDEMHTLVGAGKTDGAMDASNLLKPALARGELHCVGATTLEEYRKYVEKDAALARRFQPVFVDEPTVEDTISILRGLKEKYEQHHKVRVSDSALVAAAMLSNRYITDRFLPDKAIDLVDEAASRLRMQVDSKPEELDEIDRRIMQLKIEREALKVETDAASKDRLQRIEKELSDLEEESAELTAKWQAEKQKLGLAADLKRQLEEARNALAIAQRNGEFQKAGELAYGTIPQLEKQLADAESQENKGSLLEETVTPDHVAQVISRWTGIPVDRMLEGEREKLLRMEDEIGKRVVGQGEAVQAISKAVRRARAGLQDPNRPIGSFIFLGPTGVGKTELTKALASFLFQDDTAMVRIDMSEFMEKHSVSRLIGAPPGYVGYEEGGVLTEAVRRRPYQVILFDEIEKAHPDVFNVLLQVLDDGRLTDGQGHTVDFRNTVIIMTSNLGAEYLVNLGENDDVETVRDDVMGVVRASFRPEFLNRVDEIILFHRLRREDMGAIVDIQMQRLQYLLSDRKITLQLEDDAREWLANKGYDPAYGARPLKRVIQKEVQDPLAERILLGDILDGSLVKITAGSDRLNFRPISGAFSAAEPEREDEKA</sequence>
<evidence type="ECO:0000250" key="1"/>
<evidence type="ECO:0000255" key="2">
    <source>
        <dbReference type="PROSITE-ProRule" id="PRU01251"/>
    </source>
</evidence>
<evidence type="ECO:0000305" key="3"/>
<protein>
    <recommendedName>
        <fullName>Chaperone protein ClpB</fullName>
    </recommendedName>
</protein>
<name>CLPB_BRUME</name>
<dbReference type="EMBL" id="AE008917">
    <property type="protein sequence ID" value="AAL51377.1"/>
    <property type="status" value="ALT_INIT"/>
    <property type="molecule type" value="Genomic_DNA"/>
</dbReference>
<dbReference type="PIR" id="AF3276">
    <property type="entry name" value="AF3276"/>
</dbReference>
<dbReference type="RefSeq" id="WP_004686268.1">
    <property type="nucleotide sequence ID" value="NZ_GG703778.1"/>
</dbReference>
<dbReference type="SMR" id="Q8YJ91"/>
<dbReference type="GeneID" id="29594976"/>
<dbReference type="KEGG" id="bme:BMEI0195"/>
<dbReference type="KEGG" id="bmel:DK63_1242"/>
<dbReference type="PATRIC" id="fig|224914.52.peg.1309"/>
<dbReference type="eggNOG" id="COG0542">
    <property type="taxonomic scope" value="Bacteria"/>
</dbReference>
<dbReference type="PhylomeDB" id="Q8YJ91"/>
<dbReference type="Proteomes" id="UP000000419">
    <property type="component" value="Chromosome I"/>
</dbReference>
<dbReference type="GO" id="GO:0005737">
    <property type="term" value="C:cytoplasm"/>
    <property type="evidence" value="ECO:0007669"/>
    <property type="project" value="UniProtKB-SubCell"/>
</dbReference>
<dbReference type="GO" id="GO:0005524">
    <property type="term" value="F:ATP binding"/>
    <property type="evidence" value="ECO:0007669"/>
    <property type="project" value="UniProtKB-KW"/>
</dbReference>
<dbReference type="GO" id="GO:0016887">
    <property type="term" value="F:ATP hydrolysis activity"/>
    <property type="evidence" value="ECO:0007669"/>
    <property type="project" value="InterPro"/>
</dbReference>
<dbReference type="GO" id="GO:0034605">
    <property type="term" value="P:cellular response to heat"/>
    <property type="evidence" value="ECO:0007669"/>
    <property type="project" value="TreeGrafter"/>
</dbReference>
<dbReference type="GO" id="GO:0042026">
    <property type="term" value="P:protein refolding"/>
    <property type="evidence" value="ECO:0007669"/>
    <property type="project" value="InterPro"/>
</dbReference>
<dbReference type="CDD" id="cd00009">
    <property type="entry name" value="AAA"/>
    <property type="match status" value="1"/>
</dbReference>
<dbReference type="CDD" id="cd19499">
    <property type="entry name" value="RecA-like_ClpB_Hsp104-like"/>
    <property type="match status" value="1"/>
</dbReference>
<dbReference type="FunFam" id="3.40.50.300:FF:000120">
    <property type="entry name" value="ATP-dependent chaperone ClpB"/>
    <property type="match status" value="1"/>
</dbReference>
<dbReference type="FunFam" id="3.40.50.300:FF:000025">
    <property type="entry name" value="ATP-dependent Clp protease subunit"/>
    <property type="match status" value="1"/>
</dbReference>
<dbReference type="FunFam" id="3.40.50.300:FF:000010">
    <property type="entry name" value="Chaperone clpB 1, putative"/>
    <property type="match status" value="1"/>
</dbReference>
<dbReference type="Gene3D" id="1.10.8.60">
    <property type="match status" value="1"/>
</dbReference>
<dbReference type="Gene3D" id="1.10.1780.10">
    <property type="entry name" value="Clp, N-terminal domain"/>
    <property type="match status" value="1"/>
</dbReference>
<dbReference type="Gene3D" id="3.40.50.300">
    <property type="entry name" value="P-loop containing nucleotide triphosphate hydrolases"/>
    <property type="match status" value="3"/>
</dbReference>
<dbReference type="InterPro" id="IPR003593">
    <property type="entry name" value="AAA+_ATPase"/>
</dbReference>
<dbReference type="InterPro" id="IPR003959">
    <property type="entry name" value="ATPase_AAA_core"/>
</dbReference>
<dbReference type="InterPro" id="IPR017730">
    <property type="entry name" value="Chaperonin_ClpB"/>
</dbReference>
<dbReference type="InterPro" id="IPR019489">
    <property type="entry name" value="Clp_ATPase_C"/>
</dbReference>
<dbReference type="InterPro" id="IPR036628">
    <property type="entry name" value="Clp_N_dom_sf"/>
</dbReference>
<dbReference type="InterPro" id="IPR004176">
    <property type="entry name" value="Clp_R_dom"/>
</dbReference>
<dbReference type="InterPro" id="IPR001270">
    <property type="entry name" value="ClpA/B"/>
</dbReference>
<dbReference type="InterPro" id="IPR018368">
    <property type="entry name" value="ClpA/B_CS1"/>
</dbReference>
<dbReference type="InterPro" id="IPR028299">
    <property type="entry name" value="ClpA/B_CS2"/>
</dbReference>
<dbReference type="InterPro" id="IPR041546">
    <property type="entry name" value="ClpA/ClpB_AAA_lid"/>
</dbReference>
<dbReference type="InterPro" id="IPR050130">
    <property type="entry name" value="ClpA_ClpB"/>
</dbReference>
<dbReference type="InterPro" id="IPR027417">
    <property type="entry name" value="P-loop_NTPase"/>
</dbReference>
<dbReference type="NCBIfam" id="TIGR03346">
    <property type="entry name" value="chaperone_ClpB"/>
    <property type="match status" value="1"/>
</dbReference>
<dbReference type="PANTHER" id="PTHR11638">
    <property type="entry name" value="ATP-DEPENDENT CLP PROTEASE"/>
    <property type="match status" value="1"/>
</dbReference>
<dbReference type="PANTHER" id="PTHR11638:SF18">
    <property type="entry name" value="HEAT SHOCK PROTEIN 104"/>
    <property type="match status" value="1"/>
</dbReference>
<dbReference type="Pfam" id="PF00004">
    <property type="entry name" value="AAA"/>
    <property type="match status" value="1"/>
</dbReference>
<dbReference type="Pfam" id="PF07724">
    <property type="entry name" value="AAA_2"/>
    <property type="match status" value="1"/>
</dbReference>
<dbReference type="Pfam" id="PF17871">
    <property type="entry name" value="AAA_lid_9"/>
    <property type="match status" value="1"/>
</dbReference>
<dbReference type="Pfam" id="PF02861">
    <property type="entry name" value="Clp_N"/>
    <property type="match status" value="2"/>
</dbReference>
<dbReference type="Pfam" id="PF10431">
    <property type="entry name" value="ClpB_D2-small"/>
    <property type="match status" value="1"/>
</dbReference>
<dbReference type="PRINTS" id="PR00300">
    <property type="entry name" value="CLPPROTEASEA"/>
</dbReference>
<dbReference type="SMART" id="SM00382">
    <property type="entry name" value="AAA"/>
    <property type="match status" value="2"/>
</dbReference>
<dbReference type="SMART" id="SM01086">
    <property type="entry name" value="ClpB_D2-small"/>
    <property type="match status" value="1"/>
</dbReference>
<dbReference type="SUPFAM" id="SSF81923">
    <property type="entry name" value="Double Clp-N motif"/>
    <property type="match status" value="1"/>
</dbReference>
<dbReference type="SUPFAM" id="SSF52540">
    <property type="entry name" value="P-loop containing nucleoside triphosphate hydrolases"/>
    <property type="match status" value="2"/>
</dbReference>
<dbReference type="PROSITE" id="PS51903">
    <property type="entry name" value="CLP_R"/>
    <property type="match status" value="1"/>
</dbReference>
<dbReference type="PROSITE" id="PS00870">
    <property type="entry name" value="CLPAB_1"/>
    <property type="match status" value="1"/>
</dbReference>
<dbReference type="PROSITE" id="PS00871">
    <property type="entry name" value="CLPAB_2"/>
    <property type="match status" value="1"/>
</dbReference>
<accession>Q8YJ91</accession>
<proteinExistence type="inferred from homology"/>
<gene>
    <name type="primary">clpB</name>
    <name type="ordered locus">BMEI0195</name>
</gene>
<feature type="chain" id="PRO_0000191099" description="Chaperone protein ClpB">
    <location>
        <begin position="1"/>
        <end position="874"/>
    </location>
</feature>
<feature type="domain" description="Clp R" evidence="2">
    <location>
        <begin position="3"/>
        <end position="147"/>
    </location>
</feature>
<feature type="region of interest" description="Repeat 1" evidence="2">
    <location>
        <begin position="6"/>
        <end position="71"/>
    </location>
</feature>
<feature type="region of interest" description="Repeat 2" evidence="2">
    <location>
        <begin position="83"/>
        <end position="147"/>
    </location>
</feature>
<feature type="region of interest" description="NBD1" evidence="1">
    <location>
        <begin position="160"/>
        <end position="341"/>
    </location>
</feature>
<feature type="region of interest" description="Linker" evidence="1">
    <location>
        <begin position="342"/>
        <end position="545"/>
    </location>
</feature>
<feature type="region of interest" description="NBD2" evidence="1">
    <location>
        <begin position="555"/>
        <end position="765"/>
    </location>
</feature>
<feature type="region of interest" description="C-terminal" evidence="1">
    <location>
        <begin position="766"/>
        <end position="874"/>
    </location>
</feature>
<feature type="coiled-coil region" evidence="1">
    <location>
        <begin position="392"/>
        <end position="524"/>
    </location>
</feature>
<feature type="binding site" evidence="1">
    <location>
        <begin position="207"/>
        <end position="214"/>
    </location>
    <ligand>
        <name>ATP</name>
        <dbReference type="ChEBI" id="CHEBI:30616"/>
        <label>1</label>
    </ligand>
</feature>
<feature type="binding site" evidence="1">
    <location>
        <begin position="605"/>
        <end position="612"/>
    </location>
    <ligand>
        <name>ATP</name>
        <dbReference type="ChEBI" id="CHEBI:30616"/>
        <label>2</label>
    </ligand>
</feature>
<keyword id="KW-0067">ATP-binding</keyword>
<keyword id="KW-0143">Chaperone</keyword>
<keyword id="KW-0175">Coiled coil</keyword>
<keyword id="KW-0963">Cytoplasm</keyword>
<keyword id="KW-0547">Nucleotide-binding</keyword>
<keyword id="KW-0677">Repeat</keyword>
<keyword id="KW-0346">Stress response</keyword>
<comment type="function">
    <text evidence="1">Part of a stress-induced multi-chaperone system, it is involved in the recovery of the cell from heat-induced damage, in cooperation with DnaK, DnaJ and GrpE. Acts before DnaK, in the processing of protein aggregates. Protein binding stimulates the ATPase activity; ATP hydrolysis unfolds the denatured protein aggregates, which probably helps expose new hydrophobic binding sites on the surface of ClpB-bound aggregates, contributing to the solubilization and refolding of denatured protein aggregates by DnaK (By similarity).</text>
</comment>
<comment type="subunit">
    <text evidence="1">Homohexamer. The oligomerization is ATP-dependent (By similarity).</text>
</comment>
<comment type="subcellular location">
    <subcellularLocation>
        <location evidence="3">Cytoplasm</location>
    </subcellularLocation>
</comment>
<comment type="domain">
    <text evidence="1">The Clp repeat (R) domain probably functions as a substrate-discriminating domain, recruiting aggregated proteins to the ClpB hexamer and/or stabilizing bound proteins. The NBD2 domain is responsible for oligomerization, whereas the NBD1 domain stabilizes the hexamer probably in an ATP-dependent manner. The movement of the coiled-coil domain is essential for ClpB ability to rescue proteins from an aggregated state, probably by pulling apart large aggregated proteins, which are bound between the coiled-coils motifs of adjacent ClpB subunits in the functional hexamer (By similarity).</text>
</comment>
<comment type="similarity">
    <text evidence="3">Belongs to the ClpA/ClpB family.</text>
</comment>
<comment type="sequence caution" evidence="3">
    <conflict type="erroneous initiation">
        <sequence resource="EMBL-CDS" id="AAL51377"/>
    </conflict>
</comment>
<reference key="1">
    <citation type="journal article" date="2002" name="Proc. Natl. Acad. Sci. U.S.A.">
        <title>The genome sequence of the facultative intracellular pathogen Brucella melitensis.</title>
        <authorList>
            <person name="DelVecchio V.G."/>
            <person name="Kapatral V."/>
            <person name="Redkar R.J."/>
            <person name="Patra G."/>
            <person name="Mujer C."/>
            <person name="Los T."/>
            <person name="Ivanova N."/>
            <person name="Anderson I."/>
            <person name="Bhattacharyya A."/>
            <person name="Lykidis A."/>
            <person name="Reznik G."/>
            <person name="Jablonski L."/>
            <person name="Larsen N."/>
            <person name="D'Souza M."/>
            <person name="Bernal A."/>
            <person name="Mazur M."/>
            <person name="Goltsman E."/>
            <person name="Selkov E."/>
            <person name="Elzer P.H."/>
            <person name="Hagius S."/>
            <person name="O'Callaghan D."/>
            <person name="Letesson J.-J."/>
            <person name="Haselkorn R."/>
            <person name="Kyrpides N.C."/>
            <person name="Overbeek R."/>
        </authorList>
    </citation>
    <scope>NUCLEOTIDE SEQUENCE [LARGE SCALE GENOMIC DNA]</scope>
    <source>
        <strain>ATCC 23456 / CCUG 17765 / NCTC 10094 / 16M</strain>
    </source>
</reference>